<organism>
    <name type="scientific">Shigella dysenteriae serotype 1 (strain Sd197)</name>
    <dbReference type="NCBI Taxonomy" id="300267"/>
    <lineage>
        <taxon>Bacteria</taxon>
        <taxon>Pseudomonadati</taxon>
        <taxon>Pseudomonadota</taxon>
        <taxon>Gammaproteobacteria</taxon>
        <taxon>Enterobacterales</taxon>
        <taxon>Enterobacteriaceae</taxon>
        <taxon>Shigella</taxon>
    </lineage>
</organism>
<sequence>MKPDAHQVKQFLLNLQDTICQQLTAVDGAEFVEDSWQRESGGGGRSRVLRNGGVFEQAGVNFSHVHGEAMPASATAHRPELAGRSFEAMGVSLVVHPHNPYVPTSHANVRFFIAEKPGAEPVWWFGGGFDLTPFYGFEEDAIHWHRTARDLCLPFGEDVYPRYKKWCDDYFYLKHRNEQRGIGGLFFDDLNTPDFDHCFAFMQAVGKGYTDAYLPIVERRKAMAYAERERNFQLYRRGRYVEFNLVWDRGTLFGLQTGGRTESILMSMPPLVRWEYDYQPKDGSPEAALSEFIKVRDWV</sequence>
<dbReference type="EC" id="1.3.3.3" evidence="1"/>
<dbReference type="EMBL" id="CP000034">
    <property type="protein sequence ID" value="ABB62688.1"/>
    <property type="molecule type" value="Genomic_DNA"/>
</dbReference>
<dbReference type="RefSeq" id="WP_000801385.1">
    <property type="nucleotide sequence ID" value="NC_007606.1"/>
</dbReference>
<dbReference type="RefSeq" id="YP_404179.1">
    <property type="nucleotide sequence ID" value="NC_007606.1"/>
</dbReference>
<dbReference type="SMR" id="Q32DB7"/>
<dbReference type="STRING" id="300267.SDY_2634"/>
<dbReference type="EnsemblBacteria" id="ABB62688">
    <property type="protein sequence ID" value="ABB62688"/>
    <property type="gene ID" value="SDY_2634"/>
</dbReference>
<dbReference type="KEGG" id="sdy:SDY_2634"/>
<dbReference type="PATRIC" id="fig|300267.13.peg.3172"/>
<dbReference type="HOGENOM" id="CLU_026169_0_1_6"/>
<dbReference type="UniPathway" id="UPA00251">
    <property type="reaction ID" value="UER00322"/>
</dbReference>
<dbReference type="Proteomes" id="UP000002716">
    <property type="component" value="Chromosome"/>
</dbReference>
<dbReference type="GO" id="GO:0005737">
    <property type="term" value="C:cytoplasm"/>
    <property type="evidence" value="ECO:0007669"/>
    <property type="project" value="UniProtKB-SubCell"/>
</dbReference>
<dbReference type="GO" id="GO:0004109">
    <property type="term" value="F:coproporphyrinogen oxidase activity"/>
    <property type="evidence" value="ECO:0007669"/>
    <property type="project" value="UniProtKB-UniRule"/>
</dbReference>
<dbReference type="GO" id="GO:0046872">
    <property type="term" value="F:metal ion binding"/>
    <property type="evidence" value="ECO:0007669"/>
    <property type="project" value="UniProtKB-KW"/>
</dbReference>
<dbReference type="GO" id="GO:0042803">
    <property type="term" value="F:protein homodimerization activity"/>
    <property type="evidence" value="ECO:0000250"/>
    <property type="project" value="UniProtKB"/>
</dbReference>
<dbReference type="GO" id="GO:0006782">
    <property type="term" value="P:protoporphyrinogen IX biosynthetic process"/>
    <property type="evidence" value="ECO:0007669"/>
    <property type="project" value="UniProtKB-UniRule"/>
</dbReference>
<dbReference type="FunFam" id="3.40.1500.10:FF:000001">
    <property type="entry name" value="Oxygen-dependent coproporphyrinogen-III oxidase"/>
    <property type="match status" value="1"/>
</dbReference>
<dbReference type="Gene3D" id="3.40.1500.10">
    <property type="entry name" value="Coproporphyrinogen III oxidase, aerobic"/>
    <property type="match status" value="1"/>
</dbReference>
<dbReference type="HAMAP" id="MF_00333">
    <property type="entry name" value="Coprogen_oxidas"/>
    <property type="match status" value="1"/>
</dbReference>
<dbReference type="InterPro" id="IPR001260">
    <property type="entry name" value="Coprogen_oxidase_aer"/>
</dbReference>
<dbReference type="InterPro" id="IPR036406">
    <property type="entry name" value="Coprogen_oxidase_aer_sf"/>
</dbReference>
<dbReference type="InterPro" id="IPR018375">
    <property type="entry name" value="Coprogen_oxidase_CS"/>
</dbReference>
<dbReference type="NCBIfam" id="NF003727">
    <property type="entry name" value="PRK05330.1"/>
    <property type="match status" value="1"/>
</dbReference>
<dbReference type="PANTHER" id="PTHR10755">
    <property type="entry name" value="COPROPORPHYRINOGEN III OXIDASE, MITOCHONDRIAL"/>
    <property type="match status" value="1"/>
</dbReference>
<dbReference type="PANTHER" id="PTHR10755:SF0">
    <property type="entry name" value="OXYGEN-DEPENDENT COPROPORPHYRINOGEN-III OXIDASE, MITOCHONDRIAL"/>
    <property type="match status" value="1"/>
</dbReference>
<dbReference type="Pfam" id="PF01218">
    <property type="entry name" value="Coprogen_oxidas"/>
    <property type="match status" value="1"/>
</dbReference>
<dbReference type="PIRSF" id="PIRSF000166">
    <property type="entry name" value="Coproporphyri_ox"/>
    <property type="match status" value="1"/>
</dbReference>
<dbReference type="PRINTS" id="PR00073">
    <property type="entry name" value="COPRGNOXDASE"/>
</dbReference>
<dbReference type="SUPFAM" id="SSF102886">
    <property type="entry name" value="Coproporphyrinogen III oxidase"/>
    <property type="match status" value="1"/>
</dbReference>
<dbReference type="PROSITE" id="PS01021">
    <property type="entry name" value="COPROGEN_OXIDASE"/>
    <property type="match status" value="1"/>
</dbReference>
<accession>Q32DB7</accession>
<evidence type="ECO:0000255" key="1">
    <source>
        <dbReference type="HAMAP-Rule" id="MF_00333"/>
    </source>
</evidence>
<feature type="chain" id="PRO_1000019506" description="Oxygen-dependent coproporphyrinogen-III oxidase">
    <location>
        <begin position="1"/>
        <end position="299"/>
    </location>
</feature>
<feature type="region of interest" description="Important for dimerization" evidence="1">
    <location>
        <begin position="240"/>
        <end position="275"/>
    </location>
</feature>
<feature type="active site" description="Proton donor" evidence="1">
    <location>
        <position position="106"/>
    </location>
</feature>
<feature type="binding site" evidence="1">
    <location>
        <position position="92"/>
    </location>
    <ligand>
        <name>substrate</name>
    </ligand>
</feature>
<feature type="binding site" evidence="1">
    <location>
        <position position="96"/>
    </location>
    <ligand>
        <name>a divalent metal cation</name>
        <dbReference type="ChEBI" id="CHEBI:60240"/>
    </ligand>
</feature>
<feature type="binding site" evidence="1">
    <location>
        <position position="106"/>
    </location>
    <ligand>
        <name>a divalent metal cation</name>
        <dbReference type="ChEBI" id="CHEBI:60240"/>
    </ligand>
</feature>
<feature type="binding site" evidence="1">
    <location>
        <begin position="108"/>
        <end position="110"/>
    </location>
    <ligand>
        <name>substrate</name>
    </ligand>
</feature>
<feature type="binding site" evidence="1">
    <location>
        <position position="145"/>
    </location>
    <ligand>
        <name>a divalent metal cation</name>
        <dbReference type="ChEBI" id="CHEBI:60240"/>
    </ligand>
</feature>
<feature type="binding site" evidence="1">
    <location>
        <position position="175"/>
    </location>
    <ligand>
        <name>a divalent metal cation</name>
        <dbReference type="ChEBI" id="CHEBI:60240"/>
    </ligand>
</feature>
<feature type="binding site" evidence="1">
    <location>
        <begin position="258"/>
        <end position="260"/>
    </location>
    <ligand>
        <name>substrate</name>
    </ligand>
</feature>
<feature type="site" description="Important for dimerization" evidence="1">
    <location>
        <position position="175"/>
    </location>
</feature>
<keyword id="KW-0963">Cytoplasm</keyword>
<keyword id="KW-0350">Heme biosynthesis</keyword>
<keyword id="KW-0479">Metal-binding</keyword>
<keyword id="KW-0560">Oxidoreductase</keyword>
<keyword id="KW-0627">Porphyrin biosynthesis</keyword>
<keyword id="KW-1185">Reference proteome</keyword>
<gene>
    <name evidence="1" type="primary">hemF</name>
    <name type="ordered locus">SDY_2634</name>
</gene>
<name>HEM6_SHIDS</name>
<proteinExistence type="inferred from homology"/>
<reference key="1">
    <citation type="journal article" date="2005" name="Nucleic Acids Res.">
        <title>Genome dynamics and diversity of Shigella species, the etiologic agents of bacillary dysentery.</title>
        <authorList>
            <person name="Yang F."/>
            <person name="Yang J."/>
            <person name="Zhang X."/>
            <person name="Chen L."/>
            <person name="Jiang Y."/>
            <person name="Yan Y."/>
            <person name="Tang X."/>
            <person name="Wang J."/>
            <person name="Xiong Z."/>
            <person name="Dong J."/>
            <person name="Xue Y."/>
            <person name="Zhu Y."/>
            <person name="Xu X."/>
            <person name="Sun L."/>
            <person name="Chen S."/>
            <person name="Nie H."/>
            <person name="Peng J."/>
            <person name="Xu J."/>
            <person name="Wang Y."/>
            <person name="Yuan Z."/>
            <person name="Wen Y."/>
            <person name="Yao Z."/>
            <person name="Shen Y."/>
            <person name="Qiang B."/>
            <person name="Hou Y."/>
            <person name="Yu J."/>
            <person name="Jin Q."/>
        </authorList>
    </citation>
    <scope>NUCLEOTIDE SEQUENCE [LARGE SCALE GENOMIC DNA]</scope>
    <source>
        <strain>Sd197</strain>
    </source>
</reference>
<comment type="function">
    <text evidence="1">Involved in the heme biosynthesis. Catalyzes the aerobic oxidative decarboxylation of propionate groups of rings A and B of coproporphyrinogen-III to yield the vinyl groups in protoporphyrinogen-IX.</text>
</comment>
<comment type="catalytic activity">
    <reaction evidence="1">
        <text>coproporphyrinogen III + O2 + 2 H(+) = protoporphyrinogen IX + 2 CO2 + 2 H2O</text>
        <dbReference type="Rhea" id="RHEA:18257"/>
        <dbReference type="ChEBI" id="CHEBI:15377"/>
        <dbReference type="ChEBI" id="CHEBI:15378"/>
        <dbReference type="ChEBI" id="CHEBI:15379"/>
        <dbReference type="ChEBI" id="CHEBI:16526"/>
        <dbReference type="ChEBI" id="CHEBI:57307"/>
        <dbReference type="ChEBI" id="CHEBI:57309"/>
        <dbReference type="EC" id="1.3.3.3"/>
    </reaction>
</comment>
<comment type="cofactor">
    <cofactor evidence="1">
        <name>a divalent metal cation</name>
        <dbReference type="ChEBI" id="CHEBI:60240"/>
    </cofactor>
</comment>
<comment type="pathway">
    <text evidence="1">Porphyrin-containing compound metabolism; protoporphyrin-IX biosynthesis; protoporphyrinogen-IX from coproporphyrinogen-III (O2 route): step 1/1.</text>
</comment>
<comment type="subunit">
    <text evidence="1">Homodimer.</text>
</comment>
<comment type="subcellular location">
    <subcellularLocation>
        <location evidence="1">Cytoplasm</location>
    </subcellularLocation>
</comment>
<comment type="similarity">
    <text evidence="1">Belongs to the aerobic coproporphyrinogen-III oxidase family.</text>
</comment>
<protein>
    <recommendedName>
        <fullName evidence="1">Oxygen-dependent coproporphyrinogen-III oxidase</fullName>
        <shortName evidence="1">CPO</shortName>
        <shortName evidence="1">Coprogen oxidase</shortName>
        <shortName evidence="1">Coproporphyrinogenase</shortName>
        <ecNumber evidence="1">1.3.3.3</ecNumber>
    </recommendedName>
</protein>